<proteinExistence type="evidence at transcript level"/>
<keyword id="KW-0256">Endoplasmic reticulum</keyword>
<keyword id="KW-0434">Leukotriene biosynthesis</keyword>
<keyword id="KW-0472">Membrane</keyword>
<keyword id="KW-0539">Nucleus</keyword>
<keyword id="KW-1185">Reference proteome</keyword>
<keyword id="KW-0812">Transmembrane</keyword>
<keyword id="KW-1133">Transmembrane helix</keyword>
<reference key="1">
    <citation type="submission" date="2005-07" db="EMBL/GenBank/DDBJ databases">
        <title>Analysis of gene expression in cynomolgus monkey tissues by macaque cDNA oligo-chips.</title>
        <authorList>
            <person name="Kobayashi M."/>
            <person name="Tanuma R."/>
            <person name="Hirata M."/>
            <person name="Osada N."/>
            <person name="Kusuda J."/>
            <person name="Sugano S."/>
            <person name="Hashimoto K."/>
        </authorList>
    </citation>
    <scope>NUCLEOTIDE SEQUENCE [LARGE SCALE MRNA]</scope>
    <source>
        <tissue>Brain cortex</tissue>
    </source>
</reference>
<sequence length="161" mass="18123">MDQETVGNVVLLAIVTLISVVQNGFFAHKVEHESRTQNGRSFQRTGTLAFERVYTANQNCVDAYPTFLAVLWSAGLLCSQVPAAFAGLMYLLVRQKYFVGYLGERTQSTPGYIFGKRIILFLFLMSVAGIFNYYLIFFFGSDFENYIKTVTTTISPLLLIP</sequence>
<evidence type="ECO:0000250" key="1"/>
<evidence type="ECO:0000305" key="2"/>
<name>AL5AP_MACFA</name>
<protein>
    <recommendedName>
        <fullName>Arachidonate 5-lipoxygenase-activating protein</fullName>
    </recommendedName>
</protein>
<organism>
    <name type="scientific">Macaca fascicularis</name>
    <name type="common">Crab-eating macaque</name>
    <name type="synonym">Cynomolgus monkey</name>
    <dbReference type="NCBI Taxonomy" id="9541"/>
    <lineage>
        <taxon>Eukaryota</taxon>
        <taxon>Metazoa</taxon>
        <taxon>Chordata</taxon>
        <taxon>Craniata</taxon>
        <taxon>Vertebrata</taxon>
        <taxon>Euteleostomi</taxon>
        <taxon>Mammalia</taxon>
        <taxon>Eutheria</taxon>
        <taxon>Euarchontoglires</taxon>
        <taxon>Primates</taxon>
        <taxon>Haplorrhini</taxon>
        <taxon>Catarrhini</taxon>
        <taxon>Cercopithecidae</taxon>
        <taxon>Cercopithecinae</taxon>
        <taxon>Macaca</taxon>
    </lineage>
</organism>
<dbReference type="EMBL" id="AB220429">
    <property type="protein sequence ID" value="BAE72962.1"/>
    <property type="molecule type" value="mRNA"/>
</dbReference>
<dbReference type="RefSeq" id="XP_005585645.3">
    <property type="nucleotide sequence ID" value="XM_005585588.4"/>
</dbReference>
<dbReference type="SMR" id="Q2PG08"/>
<dbReference type="STRING" id="9541.ENSMFAP00000019139"/>
<dbReference type="Ensembl" id="ENSMFAT00000069687.2">
    <property type="protein sequence ID" value="ENSMFAP00000019139.2"/>
    <property type="gene ID" value="ENSMFAG00000032586.2"/>
</dbReference>
<dbReference type="GeneID" id="102132235"/>
<dbReference type="KEGG" id="mcf:102132235"/>
<dbReference type="CTD" id="241"/>
<dbReference type="eggNOG" id="ENOG502RZJB">
    <property type="taxonomic scope" value="Eukaryota"/>
</dbReference>
<dbReference type="GeneTree" id="ENSGT00940000158706"/>
<dbReference type="Proteomes" id="UP000233100">
    <property type="component" value="Chromosome 17"/>
</dbReference>
<dbReference type="Bgee" id="ENSMFAG00000032586">
    <property type="expression patterns" value="Expressed in bone marrow and 11 other cell types or tissues"/>
</dbReference>
<dbReference type="GO" id="GO:0005789">
    <property type="term" value="C:endoplasmic reticulum membrane"/>
    <property type="evidence" value="ECO:0007669"/>
    <property type="project" value="UniProtKB-SubCell"/>
</dbReference>
<dbReference type="GO" id="GO:0005635">
    <property type="term" value="C:nuclear envelope"/>
    <property type="evidence" value="ECO:0000250"/>
    <property type="project" value="UniProtKB"/>
</dbReference>
<dbReference type="GO" id="GO:0031965">
    <property type="term" value="C:nuclear membrane"/>
    <property type="evidence" value="ECO:0000250"/>
    <property type="project" value="UniProtKB"/>
</dbReference>
<dbReference type="GO" id="GO:0050544">
    <property type="term" value="F:arachidonate binding"/>
    <property type="evidence" value="ECO:0000250"/>
    <property type="project" value="UniProtKB"/>
</dbReference>
<dbReference type="GO" id="GO:0008047">
    <property type="term" value="F:enzyme activator activity"/>
    <property type="evidence" value="ECO:0007669"/>
    <property type="project" value="InterPro"/>
</dbReference>
<dbReference type="GO" id="GO:0004602">
    <property type="term" value="F:glutathione peroxidase activity"/>
    <property type="evidence" value="ECO:0007669"/>
    <property type="project" value="TreeGrafter"/>
</dbReference>
<dbReference type="GO" id="GO:0004364">
    <property type="term" value="F:glutathione transferase activity"/>
    <property type="evidence" value="ECO:0007669"/>
    <property type="project" value="TreeGrafter"/>
</dbReference>
<dbReference type="GO" id="GO:0004464">
    <property type="term" value="F:leukotriene-C4 synthase activity"/>
    <property type="evidence" value="ECO:0007669"/>
    <property type="project" value="TreeGrafter"/>
</dbReference>
<dbReference type="GO" id="GO:0071277">
    <property type="term" value="P:cellular response to calcium ion"/>
    <property type="evidence" value="ECO:0007669"/>
    <property type="project" value="Ensembl"/>
</dbReference>
<dbReference type="GO" id="GO:0019370">
    <property type="term" value="P:leukotriene biosynthetic process"/>
    <property type="evidence" value="ECO:0007669"/>
    <property type="project" value="UniProtKB-KW"/>
</dbReference>
<dbReference type="GO" id="GO:0002540">
    <property type="term" value="P:leukotriene production involved in inflammatory response"/>
    <property type="evidence" value="ECO:0007669"/>
    <property type="project" value="Ensembl"/>
</dbReference>
<dbReference type="GO" id="GO:0070207">
    <property type="term" value="P:protein homotrimerization"/>
    <property type="evidence" value="ECO:0007669"/>
    <property type="project" value="Ensembl"/>
</dbReference>
<dbReference type="FunFam" id="1.20.120.550:FF:000003">
    <property type="entry name" value="Leukotriene C4 synthase"/>
    <property type="match status" value="1"/>
</dbReference>
<dbReference type="Gene3D" id="1.20.120.550">
    <property type="entry name" value="Membrane associated eicosanoid/glutathione metabolism-like domain"/>
    <property type="match status" value="1"/>
</dbReference>
<dbReference type="InterPro" id="IPR001446">
    <property type="entry name" value="5_LipOase_AP"/>
</dbReference>
<dbReference type="InterPro" id="IPR018295">
    <property type="entry name" value="FLAP/GST2/LTC4S_CS"/>
</dbReference>
<dbReference type="InterPro" id="IPR050997">
    <property type="entry name" value="MAPEG"/>
</dbReference>
<dbReference type="InterPro" id="IPR023352">
    <property type="entry name" value="MAPEG-like_dom_sf"/>
</dbReference>
<dbReference type="InterPro" id="IPR001129">
    <property type="entry name" value="Membr-assoc_MAPEG"/>
</dbReference>
<dbReference type="PANTHER" id="PTHR10250:SF2">
    <property type="entry name" value="ARACHIDONATE 5-LIPOXYGENASE-ACTIVATING PROTEIN"/>
    <property type="match status" value="1"/>
</dbReference>
<dbReference type="PANTHER" id="PTHR10250">
    <property type="entry name" value="MICROSOMAL GLUTATHIONE S-TRANSFERASE"/>
    <property type="match status" value="1"/>
</dbReference>
<dbReference type="Pfam" id="PF01124">
    <property type="entry name" value="MAPEG"/>
    <property type="match status" value="1"/>
</dbReference>
<dbReference type="PRINTS" id="PR00488">
    <property type="entry name" value="5LPOXGNASEAP"/>
</dbReference>
<dbReference type="SUPFAM" id="SSF161084">
    <property type="entry name" value="MAPEG domain-like"/>
    <property type="match status" value="1"/>
</dbReference>
<dbReference type="PROSITE" id="PS01297">
    <property type="entry name" value="FLAP_GST2_LTC4S"/>
    <property type="match status" value="1"/>
</dbReference>
<accession>Q2PG08</accession>
<feature type="chain" id="PRO_0000260254" description="Arachidonate 5-lipoxygenase-activating protein">
    <location>
        <begin position="1"/>
        <end position="161"/>
    </location>
</feature>
<feature type="topological domain" description="Lumenal" evidence="1">
    <location>
        <begin position="1"/>
        <end position="8"/>
    </location>
</feature>
<feature type="transmembrane region" description="Helical" evidence="1">
    <location>
        <begin position="9"/>
        <end position="30"/>
    </location>
</feature>
<feature type="topological domain" description="Cytoplasmic" evidence="1">
    <location>
        <begin position="31"/>
        <end position="52"/>
    </location>
</feature>
<feature type="transmembrane region" description="Helical" evidence="1">
    <location>
        <begin position="53"/>
        <end position="77"/>
    </location>
</feature>
<feature type="topological domain" description="Lumenal" evidence="1">
    <location>
        <begin position="78"/>
        <end position="80"/>
    </location>
</feature>
<feature type="transmembrane region" description="Helical" evidence="1">
    <location>
        <begin position="81"/>
        <end position="102"/>
    </location>
</feature>
<feature type="topological domain" description="Cytoplasmic" evidence="1">
    <location>
        <begin position="103"/>
        <end position="107"/>
    </location>
</feature>
<feature type="intramembrane region" evidence="1">
    <location>
        <begin position="108"/>
        <end position="115"/>
    </location>
</feature>
<feature type="transmembrane region" description="Helical" evidence="1">
    <location>
        <begin position="116"/>
        <end position="128"/>
    </location>
</feature>
<feature type="topological domain" description="Lumenal" evidence="1">
    <location>
        <begin position="129"/>
        <end position="161"/>
    </location>
</feature>
<comment type="function">
    <text evidence="1">Required for leukotriene biosynthesis by ALOX5 (5-lipoxygenase). Anchors ALOX5 to the membrane. Binds arachidonic acid, and could play an essential role in the transfer of arachidonic acid to ALOX5. Binds to MK-886, a compound that blocks the biosynthesis of leukotrienes (By similarity).</text>
</comment>
<comment type="subunit">
    <text evidence="1">Homotrimer. Interacts with LTC4S and ALOX5 (By similarity).</text>
</comment>
<comment type="subcellular location">
    <subcellularLocation>
        <location evidence="1">Nucleus membrane</location>
        <topology evidence="1">Multi-pass membrane protein</topology>
    </subcellularLocation>
    <subcellularLocation>
        <location evidence="1">Endoplasmic reticulum membrane</location>
        <topology evidence="1">Multi-pass membrane protein</topology>
    </subcellularLocation>
</comment>
<comment type="domain">
    <text evidence="1">The C-terminal part after residue 140 is mostly disordered.</text>
</comment>
<comment type="similarity">
    <text evidence="2">Belongs to the MAPEG family.</text>
</comment>
<gene>
    <name type="primary">ALOX5AP</name>
    <name type="ORF">QccE-16217</name>
</gene>